<proteinExistence type="evidence at transcript level"/>
<sequence>MEPNVRFWITERQSFIQRFLQWTELLDPTNLVLSIEKIEKSRQLLLTNEDASRGDLEDKRIQEAWKRSLSTVHPDNSRLIPGPFRPAALLPFTAPTLFLSMLPVKSLKSMILPQASFYTYSTAFNIVNGNASYDRRAHESLLLGAGVIVSSTFLGLFPRLLQVRLSMNSVLSRNFIPVIILAQLSGMNVIASRSLEPMRGIEVMDKEGNVIGYSRKAGTKAVKDTATSRVVLFGTSAFIPEVFAYFFKRTQFFLQNPWSLWTLKLSCTVLVMGLMVPVSFSVFPQIGRIQCNELEKEIQSATEETELFYNRGV</sequence>
<keyword id="KW-0029">Amino-acid transport</keyword>
<keyword id="KW-0472">Membrane</keyword>
<keyword id="KW-0496">Mitochondrion</keyword>
<keyword id="KW-0999">Mitochondrion inner membrane</keyword>
<keyword id="KW-1185">Reference proteome</keyword>
<keyword id="KW-0812">Transmembrane</keyword>
<keyword id="KW-1133">Transmembrane helix</keyword>
<keyword id="KW-0813">Transport</keyword>
<protein>
    <recommendedName>
        <fullName evidence="4">Sideroflexin-4</fullName>
    </recommendedName>
</protein>
<dbReference type="EMBL" id="BC102332">
    <property type="protein sequence ID" value="AAI02333.1"/>
    <property type="molecule type" value="mRNA"/>
</dbReference>
<dbReference type="RefSeq" id="NP_001030232.1">
    <property type="nucleotide sequence ID" value="NM_001035060.2"/>
</dbReference>
<dbReference type="FunCoup" id="Q3T0M2">
    <property type="interactions" value="665"/>
</dbReference>
<dbReference type="STRING" id="9913.ENSBTAP00000011502"/>
<dbReference type="PaxDb" id="9913-ENSBTAP00000011502"/>
<dbReference type="GeneID" id="508473"/>
<dbReference type="KEGG" id="bta:508473"/>
<dbReference type="CTD" id="119559"/>
<dbReference type="VEuPathDB" id="HostDB:ENSBTAG00000008730"/>
<dbReference type="eggNOG" id="KOG3767">
    <property type="taxonomic scope" value="Eukaryota"/>
</dbReference>
<dbReference type="HOGENOM" id="CLU_039425_3_0_1"/>
<dbReference type="InParanoid" id="Q3T0M2"/>
<dbReference type="OMA" id="NVRFWIA"/>
<dbReference type="OrthoDB" id="6608471at2759"/>
<dbReference type="TreeFam" id="TF313205"/>
<dbReference type="Reactome" id="R-BTA-6799198">
    <property type="pathway name" value="Complex I biogenesis"/>
</dbReference>
<dbReference type="Proteomes" id="UP000009136">
    <property type="component" value="Chromosome 26"/>
</dbReference>
<dbReference type="Bgee" id="ENSBTAG00000008730">
    <property type="expression patterns" value="Expressed in oocyte and 104 other cell types or tissues"/>
</dbReference>
<dbReference type="GO" id="GO:0005743">
    <property type="term" value="C:mitochondrial inner membrane"/>
    <property type="evidence" value="ECO:0000318"/>
    <property type="project" value="GO_Central"/>
</dbReference>
<dbReference type="GO" id="GO:0005739">
    <property type="term" value="C:mitochondrion"/>
    <property type="evidence" value="ECO:0000250"/>
    <property type="project" value="UniProtKB"/>
</dbReference>
<dbReference type="GO" id="GO:0015075">
    <property type="term" value="F:monoatomic ion transmembrane transporter activity"/>
    <property type="evidence" value="ECO:0007669"/>
    <property type="project" value="InterPro"/>
</dbReference>
<dbReference type="GO" id="GO:0022857">
    <property type="term" value="F:transmembrane transporter activity"/>
    <property type="evidence" value="ECO:0000318"/>
    <property type="project" value="GO_Central"/>
</dbReference>
<dbReference type="GO" id="GO:0006865">
    <property type="term" value="P:amino acid transport"/>
    <property type="evidence" value="ECO:0007669"/>
    <property type="project" value="UniProtKB-KW"/>
</dbReference>
<dbReference type="GO" id="GO:1990542">
    <property type="term" value="P:mitochondrial transmembrane transport"/>
    <property type="evidence" value="ECO:0000318"/>
    <property type="project" value="GO_Central"/>
</dbReference>
<dbReference type="InterPro" id="IPR004686">
    <property type="entry name" value="Mtc"/>
</dbReference>
<dbReference type="PANTHER" id="PTHR11153">
    <property type="entry name" value="SIDEROFLEXIN"/>
    <property type="match status" value="1"/>
</dbReference>
<dbReference type="PANTHER" id="PTHR11153:SF3">
    <property type="entry name" value="SIDEROFLEXIN-4"/>
    <property type="match status" value="1"/>
</dbReference>
<dbReference type="Pfam" id="PF03820">
    <property type="entry name" value="SFXNs"/>
    <property type="match status" value="1"/>
</dbReference>
<organism>
    <name type="scientific">Bos taurus</name>
    <name type="common">Bovine</name>
    <dbReference type="NCBI Taxonomy" id="9913"/>
    <lineage>
        <taxon>Eukaryota</taxon>
        <taxon>Metazoa</taxon>
        <taxon>Chordata</taxon>
        <taxon>Craniata</taxon>
        <taxon>Vertebrata</taxon>
        <taxon>Euteleostomi</taxon>
        <taxon>Mammalia</taxon>
        <taxon>Eutheria</taxon>
        <taxon>Laurasiatheria</taxon>
        <taxon>Artiodactyla</taxon>
        <taxon>Ruminantia</taxon>
        <taxon>Pecora</taxon>
        <taxon>Bovidae</taxon>
        <taxon>Bovinae</taxon>
        <taxon>Bos</taxon>
    </lineage>
</organism>
<evidence type="ECO:0000250" key="1">
    <source>
        <dbReference type="UniProtKB" id="Q6P4A7"/>
    </source>
</evidence>
<evidence type="ECO:0000250" key="2">
    <source>
        <dbReference type="UniProtKB" id="Q9H9B4"/>
    </source>
</evidence>
<evidence type="ECO:0000255" key="3"/>
<evidence type="ECO:0000305" key="4"/>
<reference key="1">
    <citation type="submission" date="2005-08" db="EMBL/GenBank/DDBJ databases">
        <authorList>
            <consortium name="NIH - Mammalian Gene Collection (MGC) project"/>
        </authorList>
    </citation>
    <scope>NUCLEOTIDE SEQUENCE [LARGE SCALE MRNA]</scope>
    <source>
        <strain>Crossbred X Angus</strain>
        <tissue>Ileum</tissue>
    </source>
</reference>
<accession>Q3T0M2</accession>
<feature type="chain" id="PRO_0000247976" description="Sideroflexin-4">
    <location>
        <begin position="1"/>
        <end position="313"/>
    </location>
</feature>
<feature type="transmembrane region" description="Helical" evidence="3">
    <location>
        <begin position="87"/>
        <end position="107"/>
    </location>
</feature>
<feature type="transmembrane region" description="Helical" evidence="3">
    <location>
        <begin position="141"/>
        <end position="161"/>
    </location>
</feature>
<feature type="transmembrane region" description="Helical" evidence="3">
    <location>
        <begin position="175"/>
        <end position="191"/>
    </location>
</feature>
<feature type="transmembrane region" description="Helical" evidence="3">
    <location>
        <begin position="230"/>
        <end position="247"/>
    </location>
</feature>
<feature type="transmembrane region" description="Helical" evidence="3">
    <location>
        <begin position="269"/>
        <end position="289"/>
    </location>
</feature>
<gene>
    <name evidence="2" type="primary">SFXN4</name>
</gene>
<name>SFXN4_BOVIN</name>
<comment type="function">
    <text evidence="1 2">Mitochondrial amino-acid transporter (By similarity). Does not act as a serine transporter: not able to mediate transport of serine into mitochondria (By similarity).</text>
</comment>
<comment type="subcellular location">
    <subcellularLocation>
        <location evidence="1">Mitochondrion inner membrane</location>
        <topology evidence="3">Multi-pass membrane protein</topology>
    </subcellularLocation>
</comment>
<comment type="similarity">
    <text evidence="4">Belongs to the sideroflexin family.</text>
</comment>